<comment type="function">
    <text evidence="1">Transcriptional regulator which functions as a general RNA polymerase II transcription inhibitor. Core component of the 7SK RNP complex: in cooperation with 7SK snRNA sequesters P-TEFb in a large inactive 7SK snRNP complex preventing RNA polymerase II phosphorylation and subsequent transcriptional elongation. Plays a role in the regulation of DNA virus-mediated innate immune response by assembling into the HDP-RNP complex, a complex that serves as a platform for IRF3 phosphorylation and subsequent innate immune response activation through the cGAS-STING pathway.</text>
</comment>
<comment type="subunit">
    <text evidence="1">Homooligomer and heterooligomer. Core component of the 7SK RNP complex.</text>
</comment>
<comment type="subcellular location">
    <subcellularLocation>
        <location evidence="1">Nucleus</location>
    </subcellularLocation>
    <subcellularLocation>
        <location evidence="1">Cytoplasm</location>
    </subcellularLocation>
    <text evidence="1">Binds alpha-importin and is mostly nuclear.</text>
</comment>
<comment type="similarity">
    <text evidence="4">Belongs to the HEXIM family.</text>
</comment>
<keyword id="KW-0175">Coiled coil</keyword>
<keyword id="KW-0963">Cytoplasm</keyword>
<keyword id="KW-0539">Nucleus</keyword>
<keyword id="KW-1185">Reference proteome</keyword>
<keyword id="KW-0678">Repressor</keyword>
<keyword id="KW-0804">Transcription</keyword>
<keyword id="KW-0805">Transcription regulation</keyword>
<sequence>MSEVGICKSLAGGGSLLAPKEGGGWHHPVEREEHPVGDANTVSEGHDKESAYQNPGQLVKAEAQEDDWKELGKKRHRRLRSKNKRRWKPYDKLTWEEKKELEERQSQRASRIRAEMIAKGQPVAPYNTTQFLMEDHDQEEPDLCPPPRKSSAALPLALNNSSYKGDSTDDDLEEEEDEAGSDGMGGYDGEDFLQKDFSETYERYHAESLQDMSKQDLIKEYLELEKCLSRMEEENNHLRVQSLASAPAADHRDTRIQELQVELEKLKEENQRLLQEGKQVAADSP</sequence>
<dbReference type="EMBL" id="BC097693">
    <property type="protein sequence ID" value="AAH97693.1"/>
    <property type="molecule type" value="mRNA"/>
</dbReference>
<dbReference type="RefSeq" id="NP_001090038.1">
    <property type="nucleotide sequence ID" value="NM_001096569.1"/>
</dbReference>
<dbReference type="SMR" id="Q4V7W3"/>
<dbReference type="DNASU" id="735111"/>
<dbReference type="GeneID" id="735111"/>
<dbReference type="KEGG" id="xla:735111"/>
<dbReference type="AGR" id="Xenbase:XB-GENE-987000"/>
<dbReference type="CTD" id="735111"/>
<dbReference type="Xenbase" id="XB-GENE-987000">
    <property type="gene designation" value="hexim1.L"/>
</dbReference>
<dbReference type="OMA" id="WEEKQQF"/>
<dbReference type="OrthoDB" id="10058500at2759"/>
<dbReference type="Proteomes" id="UP000186698">
    <property type="component" value="Chromosome 9_10L"/>
</dbReference>
<dbReference type="Bgee" id="735111">
    <property type="expression patterns" value="Expressed in neurula embryo and 19 other cell types or tissues"/>
</dbReference>
<dbReference type="GO" id="GO:0005737">
    <property type="term" value="C:cytoplasm"/>
    <property type="evidence" value="ECO:0000318"/>
    <property type="project" value="GO_Central"/>
</dbReference>
<dbReference type="GO" id="GO:0005654">
    <property type="term" value="C:nucleoplasm"/>
    <property type="evidence" value="ECO:0000318"/>
    <property type="project" value="GO_Central"/>
</dbReference>
<dbReference type="GO" id="GO:0097322">
    <property type="term" value="F:7SK snRNA binding"/>
    <property type="evidence" value="ECO:0000318"/>
    <property type="project" value="GO_Central"/>
</dbReference>
<dbReference type="GO" id="GO:0004861">
    <property type="term" value="F:cyclin-dependent protein serine/threonine kinase inhibitor activity"/>
    <property type="evidence" value="ECO:0000318"/>
    <property type="project" value="GO_Central"/>
</dbReference>
<dbReference type="GO" id="GO:0000122">
    <property type="term" value="P:negative regulation of transcription by RNA polymerase II"/>
    <property type="evidence" value="ECO:0000318"/>
    <property type="project" value="GO_Central"/>
</dbReference>
<dbReference type="Gene3D" id="6.10.250.2910">
    <property type="match status" value="1"/>
</dbReference>
<dbReference type="InterPro" id="IPR024872">
    <property type="entry name" value="HEXIM"/>
</dbReference>
<dbReference type="PANTHER" id="PTHR13469">
    <property type="entry name" value="HEXAMETHYLENE BISACETAMIDE INDUCIBLE 1"/>
    <property type="match status" value="1"/>
</dbReference>
<dbReference type="PANTHER" id="PTHR13469:SF8">
    <property type="entry name" value="HEXIM P-TEFB COMPLEX SUBUNIT 1"/>
    <property type="match status" value="1"/>
</dbReference>
<dbReference type="Pfam" id="PF15313">
    <property type="entry name" value="HEXIM"/>
    <property type="match status" value="1"/>
</dbReference>
<dbReference type="PRINTS" id="PR02094">
    <property type="entry name" value="HEXIMFAMILY"/>
</dbReference>
<protein>
    <recommendedName>
        <fullName>Protein HEXIM1</fullName>
    </recommendedName>
</protein>
<name>HEXI1_XENLA</name>
<evidence type="ECO:0000250" key="1">
    <source>
        <dbReference type="UniProtKB" id="O94992"/>
    </source>
</evidence>
<evidence type="ECO:0000255" key="2"/>
<evidence type="ECO:0000256" key="3">
    <source>
        <dbReference type="SAM" id="MobiDB-lite"/>
    </source>
</evidence>
<evidence type="ECO:0000305" key="4"/>
<organism>
    <name type="scientific">Xenopus laevis</name>
    <name type="common">African clawed frog</name>
    <dbReference type="NCBI Taxonomy" id="8355"/>
    <lineage>
        <taxon>Eukaryota</taxon>
        <taxon>Metazoa</taxon>
        <taxon>Chordata</taxon>
        <taxon>Craniata</taxon>
        <taxon>Vertebrata</taxon>
        <taxon>Euteleostomi</taxon>
        <taxon>Amphibia</taxon>
        <taxon>Batrachia</taxon>
        <taxon>Anura</taxon>
        <taxon>Pipoidea</taxon>
        <taxon>Pipidae</taxon>
        <taxon>Xenopodinae</taxon>
        <taxon>Xenopus</taxon>
        <taxon>Xenopus</taxon>
    </lineage>
</organism>
<gene>
    <name type="primary">hexim1</name>
</gene>
<proteinExistence type="evidence at transcript level"/>
<accession>Q4V7W3</accession>
<reference key="1">
    <citation type="submission" date="2005-06" db="EMBL/GenBank/DDBJ databases">
        <authorList>
            <consortium name="NIH - Xenopus Gene Collection (XGC) project"/>
        </authorList>
    </citation>
    <scope>NUCLEOTIDE SEQUENCE [LARGE SCALE MRNA]</scope>
    <source>
        <tissue>Oocyte</tissue>
    </source>
</reference>
<feature type="chain" id="PRO_0000305270" description="Protein HEXIM1">
    <location>
        <begin position="1"/>
        <end position="285"/>
    </location>
</feature>
<feature type="region of interest" description="Disordered" evidence="3">
    <location>
        <begin position="1"/>
        <end position="56"/>
    </location>
</feature>
<feature type="region of interest" description="Disordered" evidence="3">
    <location>
        <begin position="132"/>
        <end position="196"/>
    </location>
</feature>
<feature type="coiled-coil region" evidence="2">
    <location>
        <begin position="213"/>
        <end position="284"/>
    </location>
</feature>
<feature type="compositionally biased region" description="Basic and acidic residues" evidence="3">
    <location>
        <begin position="23"/>
        <end position="36"/>
    </location>
</feature>
<feature type="compositionally biased region" description="Acidic residues" evidence="3">
    <location>
        <begin position="168"/>
        <end position="180"/>
    </location>
</feature>